<protein>
    <recommendedName>
        <fullName>Serotonin N-acetyltransferase</fullName>
        <shortName>Serotonin acetylase</shortName>
        <ecNumber evidence="6">2.3.1.87</ecNumber>
    </recommendedName>
    <alternativeName>
        <fullName>Aralkylamine N-acetyltransferase</fullName>
        <shortName>AA-NAT</shortName>
    </alternativeName>
</protein>
<comment type="function">
    <text evidence="6 11">Controls the night/day rhythm of melatonin production in the pineal gland. Catalyzes the N-acetylation of serotonin into N-acetylserotonin, the penultimate step in the synthesis of melatonin.</text>
</comment>
<comment type="catalytic activity">
    <reaction evidence="6">
        <text>a 2-arylethylamine + acetyl-CoA = an N-acetyl-2-arylethylamine + CoA + H(+)</text>
        <dbReference type="Rhea" id="RHEA:20497"/>
        <dbReference type="ChEBI" id="CHEBI:15378"/>
        <dbReference type="ChEBI" id="CHEBI:55469"/>
        <dbReference type="ChEBI" id="CHEBI:57287"/>
        <dbReference type="ChEBI" id="CHEBI:57288"/>
        <dbReference type="ChEBI" id="CHEBI:77827"/>
        <dbReference type="EC" id="2.3.1.87"/>
    </reaction>
</comment>
<comment type="biophysicochemical properties">
    <kinetics>
        <KM evidence="6">0.13 mM for tryptamine</KM>
        <KM evidence="6">2.6 mM for 5-hydroxytryptamine</KM>
        <KM evidence="6">0.55 mM for phenylethylamine</KM>
        <KM evidence="6">10.6 mM for tyramine</KM>
    </kinetics>
</comment>
<comment type="pathway">
    <text>Aromatic compound metabolism; melatonin biosynthesis; melatonin from serotonin: step 1/2.</text>
</comment>
<comment type="subunit">
    <text evidence="1">Monomer (By similarity). Interacts with several 14-3-3 proteins, including YWHAB, YWHAE, YWHAG and YWHAZ, preferentially when phosphorylated at Thr-31. Phosphorylation on Ser-205 also allows binding to YWHAZ, but with lower affinity. The interaction with YWHAZ considerably increases affinity for arylalkylamines and acetyl-CoA and protects the enzyme from dephosphorylation and proteasomal degradation (By similarity). It may also prevent thiol-dependent inactivation (By similarity).</text>
</comment>
<comment type="interaction">
    <interactant intactId="EBI-7451846">
        <id>Q16613</id>
    </interactant>
    <interactant intactId="EBI-711810">
        <id>O14503</id>
        <label>BHLHE40</label>
    </interactant>
    <organismsDiffer>false</organismsDiffer>
    <experiments>6</experiments>
</comment>
<comment type="interaction">
    <interactant intactId="EBI-7451846">
        <id>Q16613</id>
    </interactant>
    <interactant intactId="EBI-17933598">
        <id>Q8N5X7-2</id>
        <label>EIF4E3</label>
    </interactant>
    <organismsDiffer>false</organismsDiffer>
    <experiments>3</experiments>
</comment>
<comment type="interaction">
    <interactant intactId="EBI-7451846">
        <id>Q16613</id>
    </interactant>
    <interactant intactId="EBI-12353035">
        <id>Q13322-4</id>
        <label>GRB10</label>
    </interactant>
    <organismsDiffer>false</organismsDiffer>
    <experiments>3</experiments>
</comment>
<comment type="interaction">
    <interactant intactId="EBI-7451846">
        <id>Q16613</id>
    </interactant>
    <interactant intactId="EBI-10261141">
        <id>Q8IUC2</id>
        <label>KRTAP8-1</label>
    </interactant>
    <organismsDiffer>false</organismsDiffer>
    <experiments>3</experiments>
</comment>
<comment type="interaction">
    <interactant intactId="EBI-7451846">
        <id>Q16613</id>
    </interactant>
    <interactant intactId="EBI-724076">
        <id>Q99750</id>
        <label>MDFI</label>
    </interactant>
    <organismsDiffer>false</organismsDiffer>
    <experiments>6</experiments>
</comment>
<comment type="subcellular location">
    <subcellularLocation>
        <location evidence="6">Cytoplasm</location>
    </subcellularLocation>
</comment>
<comment type="alternative products">
    <event type="alternative splicing"/>
    <isoform>
        <id>Q16613-1</id>
        <name>1</name>
        <sequence type="displayed"/>
    </isoform>
    <isoform>
        <id>Q16613-2</id>
        <name>2</name>
        <sequence type="described" ref="VSP_054108"/>
    </isoform>
</comment>
<comment type="tissue specificity">
    <text evidence="9 10">Highly expressed in pineal gland and at lower levels in the retina. Weak expression in several brain regions and in the pituitary gland.</text>
</comment>
<comment type="PTM">
    <text>cAMP-dependent phosphorylation on both N-terminal Thr-31 and C-terminal Ser-205 regulates AANAT activity by promoting interaction with 14-3-3 proteins.</text>
</comment>
<comment type="similarity">
    <text evidence="11">Belongs to the acetyltransferase family. AANAT subfamily.</text>
</comment>
<comment type="sequence caution" evidence="11">
    <conflict type="erroneous initiation">
        <sequence resource="EMBL-CDS" id="AAH69434"/>
    </conflict>
    <text>Truncated N-terminus.</text>
</comment>
<sequence>MSTQSTHPLKPEAPRLPPGIPESPSCQRRHTLPASEFRCLTPEDAVSAFEIEREAFISVLGVCPLYLDEIRHFLTLCPELSLGWFEEGCLVAFIIGSLWDKERLMQESLTLHRSGGHIAHLHVLAVHRAFRQQGRGPILLWRYLHHLGSQPAVRRAALMCEDALVPFYERFSFHAVGPCAITVGSLTFMELHCSLRGHPFLRRNSGC</sequence>
<reference key="1">
    <citation type="journal article" date="1996" name="Genomics">
        <title>The human serotonin N-acetyltransferase (EC 2.3.1.87) gene (AANAT): structure, chromosomal localization, and tissue expression.</title>
        <authorList>
            <person name="Coon S.L."/>
            <person name="Mazuruk K."/>
            <person name="Bernard M."/>
            <person name="Roseboom P."/>
            <person name="Klein D.C."/>
            <person name="Rodriguez I.R."/>
        </authorList>
    </citation>
    <scope>NUCLEOTIDE SEQUENCE [GENOMIC DNA / MRNA] (ISOFORM 1)</scope>
    <scope>INDUCTION</scope>
    <scope>TISSUE SPECIFICITY</scope>
</reference>
<reference key="2">
    <citation type="journal article" date="2006" name="Nature">
        <title>DNA sequence of human chromosome 17 and analysis of rearrangement in the human lineage.</title>
        <authorList>
            <person name="Zody M.C."/>
            <person name="Garber M."/>
            <person name="Adams D.J."/>
            <person name="Sharpe T."/>
            <person name="Harrow J."/>
            <person name="Lupski J.R."/>
            <person name="Nicholson C."/>
            <person name="Searle S.M."/>
            <person name="Wilming L."/>
            <person name="Young S.K."/>
            <person name="Abouelleil A."/>
            <person name="Allen N.R."/>
            <person name="Bi W."/>
            <person name="Bloom T."/>
            <person name="Borowsky M.L."/>
            <person name="Bugalter B.E."/>
            <person name="Butler J."/>
            <person name="Chang J.L."/>
            <person name="Chen C.-K."/>
            <person name="Cook A."/>
            <person name="Corum B."/>
            <person name="Cuomo C.A."/>
            <person name="de Jong P.J."/>
            <person name="DeCaprio D."/>
            <person name="Dewar K."/>
            <person name="FitzGerald M."/>
            <person name="Gilbert J."/>
            <person name="Gibson R."/>
            <person name="Gnerre S."/>
            <person name="Goldstein S."/>
            <person name="Grafham D.V."/>
            <person name="Grocock R."/>
            <person name="Hafez N."/>
            <person name="Hagopian D.S."/>
            <person name="Hart E."/>
            <person name="Norman C.H."/>
            <person name="Humphray S."/>
            <person name="Jaffe D.B."/>
            <person name="Jones M."/>
            <person name="Kamal M."/>
            <person name="Khodiyar V.K."/>
            <person name="LaButti K."/>
            <person name="Laird G."/>
            <person name="Lehoczky J."/>
            <person name="Liu X."/>
            <person name="Lokyitsang T."/>
            <person name="Loveland J."/>
            <person name="Lui A."/>
            <person name="Macdonald P."/>
            <person name="Major J.E."/>
            <person name="Matthews L."/>
            <person name="Mauceli E."/>
            <person name="McCarroll S.A."/>
            <person name="Mihalev A.H."/>
            <person name="Mudge J."/>
            <person name="Nguyen C."/>
            <person name="Nicol R."/>
            <person name="O'Leary S.B."/>
            <person name="Osoegawa K."/>
            <person name="Schwartz D.C."/>
            <person name="Shaw-Smith C."/>
            <person name="Stankiewicz P."/>
            <person name="Steward C."/>
            <person name="Swarbreck D."/>
            <person name="Venkataraman V."/>
            <person name="Whittaker C.A."/>
            <person name="Yang X."/>
            <person name="Zimmer A.R."/>
            <person name="Bradley A."/>
            <person name="Hubbard T."/>
            <person name="Birren B.W."/>
            <person name="Rogers J."/>
            <person name="Lander E.S."/>
            <person name="Nusbaum C."/>
        </authorList>
    </citation>
    <scope>NUCLEOTIDE SEQUENCE [LARGE SCALE GENOMIC DNA]</scope>
</reference>
<reference key="3">
    <citation type="journal article" date="2004" name="Genome Res.">
        <title>The status, quality, and expansion of the NIH full-length cDNA project: the Mammalian Gene Collection (MGC).</title>
        <authorList>
            <consortium name="The MGC Project Team"/>
        </authorList>
    </citation>
    <scope>NUCLEOTIDE SEQUENCE [LARGE SCALE MRNA]</scope>
    <source>
        <tissue>Brain</tissue>
        <tissue>Testis</tissue>
    </source>
</reference>
<reference key="4">
    <citation type="journal article" date="2001" name="J. Biol. Chem.">
        <title>cAMP regulation of arylalkylamine N-acetyltransferase (AANAT, EC 2.3.1.87): a new cell line (1E7) provides evidence of intracellular AANAT activation.</title>
        <authorList>
            <person name="Coon S.L."/>
            <person name="Weller J.L."/>
            <person name="Korf H.-W."/>
            <person name="Namboodiri M.A."/>
            <person name="Rollag M."/>
            <person name="Klein D.C."/>
        </authorList>
    </citation>
    <scope>SUBCELLULAR LOCATION</scope>
    <scope>INDUCTION</scope>
    <scope>CATALYTIC ACTIVITY</scope>
    <scope>BIOPHYSICOCHEMICAL PROPERTIES</scope>
</reference>
<reference key="5">
    <citation type="journal article" date="2001" name="Proc. Natl. Acad. Sci. U.S.A.">
        <title>Role of a pineal cAMP-operated arylalkylamine N-acetyltransferase/14-3-3-binding switch in melatonin synthesis.</title>
        <authorList>
            <person name="Ganguly S."/>
            <person name="Gastel J.A."/>
            <person name="Weller J.L."/>
            <person name="Schwartz C."/>
            <person name="Jaffe H."/>
            <person name="Namboodiri M.A."/>
            <person name="Coon S.L."/>
            <person name="Hickman A.B."/>
            <person name="Rollag M."/>
            <person name="Obsil T."/>
            <person name="Beauverger P."/>
            <person name="Ferry G."/>
            <person name="Boutin J.A."/>
            <person name="Klein D.C."/>
        </authorList>
    </citation>
    <scope>INTERACTION WITH 14-3-3 PROTEINS</scope>
    <scope>MUTAGENESIS OF THR-31</scope>
</reference>
<reference key="6">
    <citation type="journal article" date="2007" name="J. Physiol. Pharmacol.">
        <title>Role of melatonin in upper gastrointestinal tract.</title>
        <authorList>
            <person name="Konturek S.J."/>
            <person name="Konturek P.C."/>
            <person name="Brzozowski T."/>
            <person name="Bubenik G.A."/>
        </authorList>
    </citation>
    <scope>TISSUE SPECIFICITY</scope>
</reference>
<reference key="7">
    <citation type="journal article" date="2003" name="Neurogenetics">
        <title>Significant association of the arylalkylamine N-acetyltransferase (AA-NAT) gene with delayed sleep phase syndrome.</title>
        <authorList>
            <person name="Hohjoh H."/>
            <person name="Takasu M."/>
            <person name="Shishikura K."/>
            <person name="Takahashi Y."/>
            <person name="Honda Y."/>
            <person name="Tokunaga K."/>
        </authorList>
    </citation>
    <scope>VARIANT THR-129</scope>
</reference>
<feature type="chain" id="PRO_0000074580" description="Serotonin N-acetyltransferase">
    <location>
        <begin position="1"/>
        <end position="207"/>
    </location>
</feature>
<feature type="domain" description="N-acetyltransferase" evidence="4">
    <location>
        <begin position="35"/>
        <end position="194"/>
    </location>
</feature>
<feature type="region of interest" description="Disordered" evidence="5">
    <location>
        <begin position="1"/>
        <end position="28"/>
    </location>
</feature>
<feature type="binding site" evidence="3">
    <location>
        <begin position="124"/>
        <end position="126"/>
    </location>
    <ligand>
        <name>acetyl-CoA</name>
        <dbReference type="ChEBI" id="CHEBI:57288"/>
    </ligand>
</feature>
<feature type="binding site" evidence="3">
    <location>
        <position position="124"/>
    </location>
    <ligand>
        <name>substrate</name>
    </ligand>
</feature>
<feature type="binding site" evidence="3">
    <location>
        <begin position="132"/>
        <end position="137"/>
    </location>
    <ligand>
        <name>acetyl-CoA</name>
        <dbReference type="ChEBI" id="CHEBI:57288"/>
    </ligand>
</feature>
<feature type="binding site" evidence="3">
    <location>
        <position position="159"/>
    </location>
    <ligand>
        <name>substrate</name>
    </ligand>
</feature>
<feature type="binding site" evidence="3">
    <location>
        <begin position="168"/>
        <end position="170"/>
    </location>
    <ligand>
        <name>acetyl-CoA</name>
        <dbReference type="ChEBI" id="CHEBI:57288"/>
    </ligand>
</feature>
<feature type="site" description="Important for the catalytic mechanism; involved in substrate deprotonation" evidence="3">
    <location>
        <position position="120"/>
    </location>
</feature>
<feature type="site" description="Important for the catalytic mechanism; involved in substrate deprotonation" evidence="3">
    <location>
        <position position="122"/>
    </location>
</feature>
<feature type="modified residue" description="Phosphothreonine; by PKA" evidence="2">
    <location>
        <position position="31"/>
    </location>
</feature>
<feature type="modified residue" description="Phosphoserine" evidence="3">
    <location>
        <position position="205"/>
    </location>
</feature>
<feature type="splice variant" id="VSP_054108" description="In isoform 2." evidence="11">
    <original>M</original>
    <variation>MEPQSMKGQKRPFGGPWRLKVLGGPPWLRRTLPKLGRPKEAPVARM</variation>
    <location>
        <position position="1"/>
    </location>
</feature>
<feature type="sequence variant" id="VAR_048168" description="In dbSNP:rs34470791.">
    <original>R</original>
    <variation>C</variation>
    <location>
        <position position="15"/>
    </location>
</feature>
<feature type="sequence variant" id="VAR_055086" description="In dbSNP:rs28936679." evidence="8">
    <original>A</original>
    <variation>T</variation>
    <location>
        <position position="129"/>
    </location>
</feature>
<feature type="mutagenesis site" description="Loss of activation by cAMP." evidence="7">
    <original>T</original>
    <variation>A</variation>
    <location>
        <position position="31"/>
    </location>
</feature>
<dbReference type="EC" id="2.3.1.87" evidence="6"/>
<dbReference type="EMBL" id="U40347">
    <property type="protein sequence ID" value="AAC50554.1"/>
    <property type="molecule type" value="mRNA"/>
</dbReference>
<dbReference type="EMBL" id="U40391">
    <property type="protein sequence ID" value="AAC50555.1"/>
    <property type="molecule type" value="Genomic_DNA"/>
</dbReference>
<dbReference type="EMBL" id="AC015802">
    <property type="status" value="NOT_ANNOTATED_CDS"/>
    <property type="molecule type" value="Genomic_DNA"/>
</dbReference>
<dbReference type="EMBL" id="BC069434">
    <property type="protein sequence ID" value="AAH69434.1"/>
    <property type="status" value="ALT_INIT"/>
    <property type="molecule type" value="mRNA"/>
</dbReference>
<dbReference type="EMBL" id="BC092430">
    <property type="protein sequence ID" value="AAH92430.1"/>
    <property type="molecule type" value="mRNA"/>
</dbReference>
<dbReference type="EMBL" id="BC126332">
    <property type="protein sequence ID" value="AAI26333.1"/>
    <property type="molecule type" value="mRNA"/>
</dbReference>
<dbReference type="EMBL" id="BC126334">
    <property type="protein sequence ID" value="AAI26335.1"/>
    <property type="molecule type" value="mRNA"/>
</dbReference>
<dbReference type="CCDS" id="CCDS11745.1">
    <molecule id="Q16613-1"/>
</dbReference>
<dbReference type="CCDS" id="CCDS54169.1">
    <molecule id="Q16613-2"/>
</dbReference>
<dbReference type="RefSeq" id="NP_001079.1">
    <molecule id="Q16613-1"/>
    <property type="nucleotide sequence ID" value="NM_001088.3"/>
</dbReference>
<dbReference type="RefSeq" id="NP_001160051.1">
    <molecule id="Q16613-2"/>
    <property type="nucleotide sequence ID" value="NM_001166579.2"/>
</dbReference>
<dbReference type="RefSeq" id="XP_054171212.1">
    <molecule id="Q16613-1"/>
    <property type="nucleotide sequence ID" value="XM_054315237.1"/>
</dbReference>
<dbReference type="RefSeq" id="XP_054171213.1">
    <molecule id="Q16613-1"/>
    <property type="nucleotide sequence ID" value="XM_054315238.1"/>
</dbReference>
<dbReference type="RefSeq" id="XP_054171214.1">
    <molecule id="Q16613-1"/>
    <property type="nucleotide sequence ID" value="XM_054315239.1"/>
</dbReference>
<dbReference type="RefSeq" id="XP_054171215.1">
    <molecule id="Q16613-1"/>
    <property type="nucleotide sequence ID" value="XM_054315240.1"/>
</dbReference>
<dbReference type="RefSeq" id="XP_054171216.1">
    <molecule id="Q16613-1"/>
    <property type="nucleotide sequence ID" value="XM_054315241.1"/>
</dbReference>
<dbReference type="RefSeq" id="XP_054171217.1">
    <molecule id="Q16613-1"/>
    <property type="nucleotide sequence ID" value="XM_054315242.1"/>
</dbReference>
<dbReference type="PDB" id="6T80">
    <property type="method" value="X-ray"/>
    <property type="resolution" value="2.99 A"/>
    <property type="chains" value="E/F/G/H=197-207"/>
</dbReference>
<dbReference type="PDBsum" id="6T80"/>
<dbReference type="SMR" id="Q16613"/>
<dbReference type="BioGRID" id="106533">
    <property type="interactions" value="13"/>
</dbReference>
<dbReference type="FunCoup" id="Q16613">
    <property type="interactions" value="499"/>
</dbReference>
<dbReference type="IntAct" id="Q16613">
    <property type="interactions" value="9"/>
</dbReference>
<dbReference type="MINT" id="Q16613"/>
<dbReference type="STRING" id="9606.ENSP00000250615"/>
<dbReference type="BindingDB" id="Q16613"/>
<dbReference type="DrugBank" id="DB09061">
    <property type="generic name" value="Cannabidiol"/>
</dbReference>
<dbReference type="DrugBank" id="DB03341">
    <property type="generic name" value="CoA-S-acetyl 5-bromotryptamine"/>
</dbReference>
<dbReference type="DrugBank" id="DB02931">
    <property type="generic name" value="CoA-s-acetyl tryptamine"/>
</dbReference>
<dbReference type="DrugBank" id="DB01777">
    <property type="generic name" value="CoA-S-trimethylene-acetyl-tryptamine"/>
</dbReference>
<dbReference type="DrugBank" id="DB14009">
    <property type="generic name" value="Medical Cannabis"/>
</dbReference>
<dbReference type="DrugBank" id="DB14011">
    <property type="generic name" value="Nabiximols"/>
</dbReference>
<dbReference type="GlyGen" id="Q16613">
    <property type="glycosylation" value="1 site"/>
</dbReference>
<dbReference type="iPTMnet" id="Q16613"/>
<dbReference type="PhosphoSitePlus" id="Q16613"/>
<dbReference type="BioMuta" id="AANAT"/>
<dbReference type="DMDM" id="11387096"/>
<dbReference type="jPOST" id="Q16613"/>
<dbReference type="MassIVE" id="Q16613"/>
<dbReference type="PaxDb" id="9606-ENSP00000250615"/>
<dbReference type="PeptideAtlas" id="Q16613"/>
<dbReference type="Antibodypedia" id="32420">
    <property type="antibodies" value="285 antibodies from 30 providers"/>
</dbReference>
<dbReference type="DNASU" id="15"/>
<dbReference type="Ensembl" id="ENST00000250615.7">
    <molecule id="Q16613-2"/>
    <property type="protein sequence ID" value="ENSP00000250615.2"/>
    <property type="gene ID" value="ENSG00000129673.10"/>
</dbReference>
<dbReference type="Ensembl" id="ENST00000392492.8">
    <molecule id="Q16613-1"/>
    <property type="protein sequence ID" value="ENSP00000376282.2"/>
    <property type="gene ID" value="ENSG00000129673.10"/>
</dbReference>
<dbReference type="GeneID" id="15"/>
<dbReference type="KEGG" id="hsa:15"/>
<dbReference type="MANE-Select" id="ENST00000392492.8">
    <property type="protein sequence ID" value="ENSP00000376282.2"/>
    <property type="RefSeq nucleotide sequence ID" value="NM_001088.3"/>
    <property type="RefSeq protein sequence ID" value="NP_001079.1"/>
</dbReference>
<dbReference type="UCSC" id="uc002jro.4">
    <molecule id="Q16613-1"/>
    <property type="organism name" value="human"/>
</dbReference>
<dbReference type="AGR" id="HGNC:19"/>
<dbReference type="CTD" id="15"/>
<dbReference type="DisGeNET" id="15"/>
<dbReference type="GeneCards" id="AANAT"/>
<dbReference type="HGNC" id="HGNC:19">
    <property type="gene designation" value="AANAT"/>
</dbReference>
<dbReference type="HPA" id="ENSG00000129673">
    <property type="expression patterns" value="Tissue enhanced (retina, testis)"/>
</dbReference>
<dbReference type="MalaCards" id="AANAT"/>
<dbReference type="MIM" id="600950">
    <property type="type" value="gene"/>
</dbReference>
<dbReference type="neXtProt" id="NX_Q16613"/>
<dbReference type="OpenTargets" id="ENSG00000129673"/>
<dbReference type="PharmGKB" id="PA24366"/>
<dbReference type="VEuPathDB" id="HostDB:ENSG00000129673"/>
<dbReference type="eggNOG" id="KOG4144">
    <property type="taxonomic scope" value="Eukaryota"/>
</dbReference>
<dbReference type="GeneTree" id="ENSGT00390000015579"/>
<dbReference type="HOGENOM" id="CLU_061829_3_1_1"/>
<dbReference type="InParanoid" id="Q16613"/>
<dbReference type="OrthoDB" id="30840at2759"/>
<dbReference type="PAN-GO" id="Q16613">
    <property type="GO annotations" value="5 GO annotations based on evolutionary models"/>
</dbReference>
<dbReference type="PhylomeDB" id="Q16613"/>
<dbReference type="TreeFam" id="TF331622"/>
<dbReference type="BioCyc" id="MetaCyc:HS05303-MONOMER"/>
<dbReference type="BRENDA" id="2.3.1.87">
    <property type="organism ID" value="2681"/>
</dbReference>
<dbReference type="PathwayCommons" id="Q16613"/>
<dbReference type="Reactome" id="R-HSA-209931">
    <property type="pathway name" value="Serotonin and melatonin biosynthesis"/>
</dbReference>
<dbReference type="SABIO-RK" id="Q16613"/>
<dbReference type="SignaLink" id="Q16613"/>
<dbReference type="SIGNOR" id="Q16613"/>
<dbReference type="UniPathway" id="UPA00837">
    <property type="reaction ID" value="UER00815"/>
</dbReference>
<dbReference type="BioGRID-ORCS" id="15">
    <property type="hits" value="8 hits in 1145 CRISPR screens"/>
</dbReference>
<dbReference type="ChiTaRS" id="AANAT">
    <property type="organism name" value="human"/>
</dbReference>
<dbReference type="GenomeRNAi" id="15"/>
<dbReference type="Pharos" id="Q16613">
    <property type="development level" value="Tbio"/>
</dbReference>
<dbReference type="PRO" id="PR:Q16613"/>
<dbReference type="Proteomes" id="UP000005640">
    <property type="component" value="Chromosome 17"/>
</dbReference>
<dbReference type="RNAct" id="Q16613">
    <property type="molecule type" value="protein"/>
</dbReference>
<dbReference type="Bgee" id="ENSG00000129673">
    <property type="expression patterns" value="Expressed in primordial germ cell in gonad and 97 other cell types or tissues"/>
</dbReference>
<dbReference type="ExpressionAtlas" id="Q16613">
    <property type="expression patterns" value="baseline and differential"/>
</dbReference>
<dbReference type="GO" id="GO:0005737">
    <property type="term" value="C:cytoplasm"/>
    <property type="evidence" value="ECO:0000318"/>
    <property type="project" value="GO_Central"/>
</dbReference>
<dbReference type="GO" id="GO:0005829">
    <property type="term" value="C:cytosol"/>
    <property type="evidence" value="ECO:0000314"/>
    <property type="project" value="HPA"/>
</dbReference>
<dbReference type="GO" id="GO:0048471">
    <property type="term" value="C:perinuclear region of cytoplasm"/>
    <property type="evidence" value="ECO:0000314"/>
    <property type="project" value="UniProtKB"/>
</dbReference>
<dbReference type="GO" id="GO:0071889">
    <property type="term" value="F:14-3-3 protein binding"/>
    <property type="evidence" value="ECO:0007669"/>
    <property type="project" value="Ensembl"/>
</dbReference>
<dbReference type="GO" id="GO:0004059">
    <property type="term" value="F:aralkylamine N-acetyltransferase activity"/>
    <property type="evidence" value="ECO:0000314"/>
    <property type="project" value="UniProtKB"/>
</dbReference>
<dbReference type="GO" id="GO:0004060">
    <property type="term" value="F:arylamine N-acetyltransferase activity"/>
    <property type="evidence" value="ECO:0007669"/>
    <property type="project" value="Ensembl"/>
</dbReference>
<dbReference type="GO" id="GO:0071320">
    <property type="term" value="P:cellular response to cAMP"/>
    <property type="evidence" value="ECO:0000314"/>
    <property type="project" value="UniProtKB"/>
</dbReference>
<dbReference type="GO" id="GO:0007623">
    <property type="term" value="P:circadian rhythm"/>
    <property type="evidence" value="ECO:0000315"/>
    <property type="project" value="UniProtKB"/>
</dbReference>
<dbReference type="GO" id="GO:0046219">
    <property type="term" value="P:indolalkylamine biosynthetic process"/>
    <property type="evidence" value="ECO:0000304"/>
    <property type="project" value="Reactome"/>
</dbReference>
<dbReference type="GO" id="GO:0030187">
    <property type="term" value="P:melatonin biosynthetic process"/>
    <property type="evidence" value="ECO:0000314"/>
    <property type="project" value="UniProtKB"/>
</dbReference>
<dbReference type="GO" id="GO:0006474">
    <property type="term" value="P:N-terminal protein amino acid acetylation"/>
    <property type="evidence" value="ECO:0000314"/>
    <property type="project" value="UniProtKB"/>
</dbReference>
<dbReference type="GO" id="GO:0009648">
    <property type="term" value="P:photoperiodism"/>
    <property type="evidence" value="ECO:0007669"/>
    <property type="project" value="Ensembl"/>
</dbReference>
<dbReference type="GO" id="GO:0051592">
    <property type="term" value="P:response to calcium ion"/>
    <property type="evidence" value="ECO:0007669"/>
    <property type="project" value="Ensembl"/>
</dbReference>
<dbReference type="GO" id="GO:0046688">
    <property type="term" value="P:response to copper ion"/>
    <property type="evidence" value="ECO:0007669"/>
    <property type="project" value="Ensembl"/>
</dbReference>
<dbReference type="GO" id="GO:0051412">
    <property type="term" value="P:response to corticosterone"/>
    <property type="evidence" value="ECO:0007669"/>
    <property type="project" value="Ensembl"/>
</dbReference>
<dbReference type="GO" id="GO:0034097">
    <property type="term" value="P:response to cytokine"/>
    <property type="evidence" value="ECO:0007669"/>
    <property type="project" value="Ensembl"/>
</dbReference>
<dbReference type="GO" id="GO:0032868">
    <property type="term" value="P:response to insulin"/>
    <property type="evidence" value="ECO:0007669"/>
    <property type="project" value="Ensembl"/>
</dbReference>
<dbReference type="GO" id="GO:0009416">
    <property type="term" value="P:response to light stimulus"/>
    <property type="evidence" value="ECO:0000318"/>
    <property type="project" value="GO_Central"/>
</dbReference>
<dbReference type="GO" id="GO:0034695">
    <property type="term" value="P:response to prostaglandin E"/>
    <property type="evidence" value="ECO:0007669"/>
    <property type="project" value="Ensembl"/>
</dbReference>
<dbReference type="GO" id="GO:0010043">
    <property type="term" value="P:response to zinc ion"/>
    <property type="evidence" value="ECO:0007669"/>
    <property type="project" value="Ensembl"/>
</dbReference>
<dbReference type="FunFam" id="3.40.630.30:FF:000021">
    <property type="entry name" value="Serotonin N-acetyltransferase"/>
    <property type="match status" value="1"/>
</dbReference>
<dbReference type="Gene3D" id="3.40.630.30">
    <property type="match status" value="1"/>
</dbReference>
<dbReference type="InterPro" id="IPR016181">
    <property type="entry name" value="Acyl_CoA_acyltransferase"/>
</dbReference>
<dbReference type="InterPro" id="IPR000182">
    <property type="entry name" value="GNAT_dom"/>
</dbReference>
<dbReference type="InterPro" id="IPR051635">
    <property type="entry name" value="SNAT-like"/>
</dbReference>
<dbReference type="PANTHER" id="PTHR10908">
    <property type="entry name" value="SEROTONIN N-ACETYLTRANSFERASE"/>
    <property type="match status" value="1"/>
</dbReference>
<dbReference type="PANTHER" id="PTHR10908:SF0">
    <property type="entry name" value="SEROTONIN N-ACETYLTRANSFERASE"/>
    <property type="match status" value="1"/>
</dbReference>
<dbReference type="Pfam" id="PF00583">
    <property type="entry name" value="Acetyltransf_1"/>
    <property type="match status" value="1"/>
</dbReference>
<dbReference type="SUPFAM" id="SSF55729">
    <property type="entry name" value="Acyl-CoA N-acyltransferases (Nat)"/>
    <property type="match status" value="1"/>
</dbReference>
<dbReference type="PROSITE" id="PS51186">
    <property type="entry name" value="GNAT"/>
    <property type="match status" value="1"/>
</dbReference>
<accession>Q16613</accession>
<accession>A0AVF2</accession>
<accession>J3KMZ5</accession>
<accession>Q562F4</accession>
<keyword id="KW-0002">3D-structure</keyword>
<keyword id="KW-0012">Acyltransferase</keyword>
<keyword id="KW-0025">Alternative splicing</keyword>
<keyword id="KW-0090">Biological rhythms</keyword>
<keyword id="KW-0963">Cytoplasm</keyword>
<keyword id="KW-0471">Melatonin biosynthesis</keyword>
<keyword id="KW-0597">Phosphoprotein</keyword>
<keyword id="KW-1267">Proteomics identification</keyword>
<keyword id="KW-1185">Reference proteome</keyword>
<keyword id="KW-0808">Transferase</keyword>
<organism>
    <name type="scientific">Homo sapiens</name>
    <name type="common">Human</name>
    <dbReference type="NCBI Taxonomy" id="9606"/>
    <lineage>
        <taxon>Eukaryota</taxon>
        <taxon>Metazoa</taxon>
        <taxon>Chordata</taxon>
        <taxon>Craniata</taxon>
        <taxon>Vertebrata</taxon>
        <taxon>Euteleostomi</taxon>
        <taxon>Mammalia</taxon>
        <taxon>Eutheria</taxon>
        <taxon>Euarchontoglires</taxon>
        <taxon>Primates</taxon>
        <taxon>Haplorrhini</taxon>
        <taxon>Catarrhini</taxon>
        <taxon>Hominidae</taxon>
        <taxon>Homo</taxon>
    </lineage>
</organism>
<name>SNAT_HUMAN</name>
<evidence type="ECO:0000250" key="1"/>
<evidence type="ECO:0000250" key="2">
    <source>
        <dbReference type="UniProtKB" id="O97756"/>
    </source>
</evidence>
<evidence type="ECO:0000250" key="3">
    <source>
        <dbReference type="UniProtKB" id="Q29495"/>
    </source>
</evidence>
<evidence type="ECO:0000255" key="4">
    <source>
        <dbReference type="PROSITE-ProRule" id="PRU00532"/>
    </source>
</evidence>
<evidence type="ECO:0000256" key="5">
    <source>
        <dbReference type="SAM" id="MobiDB-lite"/>
    </source>
</evidence>
<evidence type="ECO:0000269" key="6">
    <source>
    </source>
</evidence>
<evidence type="ECO:0000269" key="7">
    <source>
    </source>
</evidence>
<evidence type="ECO:0000269" key="8">
    <source>
    </source>
</evidence>
<evidence type="ECO:0000269" key="9">
    <source>
    </source>
</evidence>
<evidence type="ECO:0000269" key="10">
    <source>
    </source>
</evidence>
<evidence type="ECO:0000305" key="11"/>
<proteinExistence type="evidence at protein level"/>
<gene>
    <name type="primary">AANAT</name>
    <name type="synonym">SNAT</name>
</gene>